<feature type="propeptide" id="PRO_0000000658" description="Removed in mature form" evidence="1">
    <location>
        <begin position="1"/>
        <end position="2"/>
    </location>
</feature>
<feature type="chain" id="PRO_0000000659" description="Actin-42A">
    <location>
        <begin position="3"/>
        <end position="376"/>
    </location>
</feature>
<feature type="modified residue" description="N-acetylaspartate" evidence="1">
    <location>
        <position position="3"/>
    </location>
</feature>
<feature type="modified residue" description="Methionine sulfoxide" evidence="5">
    <location>
        <position position="45"/>
    </location>
</feature>
<feature type="modified residue" description="Methionine sulfoxide" evidence="5">
    <location>
        <position position="48"/>
    </location>
</feature>
<feature type="modified residue" description="Tele-methylhistidine" evidence="6">
    <location>
        <position position="74"/>
    </location>
</feature>
<feature type="sequence conflict" description="In Ref. 2; CAA38618." evidence="8" ref="2">
    <location>
        <begin position="12"/>
        <end position="287"/>
    </location>
</feature>
<feature type="sequence conflict" description="In Ref. 1; AAA28314." evidence="8" ref="1">
    <original>I</original>
    <variation>L</variation>
    <location>
        <position position="275"/>
    </location>
</feature>
<dbReference type="EC" id="3.6.4.-" evidence="3"/>
<dbReference type="EMBL" id="K00670">
    <property type="protein sequence ID" value="AAA28314.1"/>
    <property type="molecule type" value="Genomic_DNA"/>
</dbReference>
<dbReference type="EMBL" id="X54848">
    <property type="protein sequence ID" value="CAA38618.1"/>
    <property type="molecule type" value="Genomic_DNA"/>
</dbReference>
<dbReference type="EMBL" id="AE013599">
    <property type="protein sequence ID" value="AAF57294.1"/>
    <property type="molecule type" value="Genomic_DNA"/>
</dbReference>
<dbReference type="EMBL" id="AY118907">
    <property type="protein sequence ID" value="AAM50767.1"/>
    <property type="molecule type" value="mRNA"/>
</dbReference>
<dbReference type="EMBL" id="X05176">
    <property type="protein sequence ID" value="CAA28809.1"/>
    <property type="molecule type" value="Genomic_DNA"/>
</dbReference>
<dbReference type="PIR" id="A03000">
    <property type="entry name" value="A03000"/>
</dbReference>
<dbReference type="PIR" id="S14851">
    <property type="entry name" value="S14851"/>
</dbReference>
<dbReference type="RefSeq" id="NP_523625.1">
    <property type="nucleotide sequence ID" value="NM_078901.3"/>
</dbReference>
<dbReference type="SMR" id="P02572"/>
<dbReference type="BioGRID" id="61432">
    <property type="interactions" value="29"/>
</dbReference>
<dbReference type="ComplexPortal" id="CPX-2383">
    <property type="entry name" value="Polybromo-containing BRAHMA associated proteins complex"/>
</dbReference>
<dbReference type="DIP" id="DIP-20355N"/>
<dbReference type="FunCoup" id="P02572">
    <property type="interactions" value="1124"/>
</dbReference>
<dbReference type="IntAct" id="P02572">
    <property type="interactions" value="36"/>
</dbReference>
<dbReference type="STRING" id="7227.FBpp0085365"/>
<dbReference type="PaxDb" id="7227-FBpp0085365"/>
<dbReference type="DNASU" id="35526"/>
<dbReference type="EnsemblMetazoa" id="FBtr0086029">
    <property type="protein sequence ID" value="FBpp0085365"/>
    <property type="gene ID" value="FBgn0000043"/>
</dbReference>
<dbReference type="GeneID" id="35526"/>
<dbReference type="KEGG" id="dme:Dmel_CG12051"/>
<dbReference type="AGR" id="FB:FBgn0000043"/>
<dbReference type="CTD" id="35526"/>
<dbReference type="FlyBase" id="FBgn0000043">
    <property type="gene designation" value="Act42A"/>
</dbReference>
<dbReference type="VEuPathDB" id="VectorBase:FBgn0000043"/>
<dbReference type="eggNOG" id="KOG0676">
    <property type="taxonomic scope" value="Eukaryota"/>
</dbReference>
<dbReference type="GeneTree" id="ENSGT00950000182960"/>
<dbReference type="HOGENOM" id="CLU_027965_0_2_1"/>
<dbReference type="InParanoid" id="P02572"/>
<dbReference type="OMA" id="PNIMVGM"/>
<dbReference type="OrthoDB" id="422673at2759"/>
<dbReference type="PhylomeDB" id="P02572"/>
<dbReference type="Reactome" id="R-DME-114608">
    <property type="pathway name" value="Platelet degranulation"/>
</dbReference>
<dbReference type="Reactome" id="R-DME-190873">
    <property type="pathway name" value="Gap junction degradation"/>
</dbReference>
<dbReference type="Reactome" id="R-DME-196025">
    <property type="pathway name" value="Formation of annular gap junctions"/>
</dbReference>
<dbReference type="Reactome" id="R-DME-2029482">
    <property type="pathway name" value="Regulation of actin dynamics for phagocytic cup formation"/>
</dbReference>
<dbReference type="Reactome" id="R-DME-3928662">
    <property type="pathway name" value="EPHB-mediated forward signaling"/>
</dbReference>
<dbReference type="Reactome" id="R-DME-3928665">
    <property type="pathway name" value="EPH-ephrin mediated repulsion of cells"/>
</dbReference>
<dbReference type="Reactome" id="R-DME-4420097">
    <property type="pathway name" value="VEGFA-VEGFR2 Pathway"/>
</dbReference>
<dbReference type="Reactome" id="R-DME-446353">
    <property type="pathway name" value="Cell-extracellular matrix interactions"/>
</dbReference>
<dbReference type="Reactome" id="R-DME-5663213">
    <property type="pathway name" value="RHO GTPases Activate WASPs and WAVEs"/>
</dbReference>
<dbReference type="Reactome" id="R-DME-5674135">
    <property type="pathway name" value="MAP2K and MAPK activation"/>
</dbReference>
<dbReference type="Reactome" id="R-DME-8856828">
    <property type="pathway name" value="Clathrin-mediated endocytosis"/>
</dbReference>
<dbReference type="Reactome" id="R-DME-9013418">
    <property type="pathway name" value="RHOBTB2 GTPase cycle"/>
</dbReference>
<dbReference type="Reactome" id="R-DME-9035034">
    <property type="pathway name" value="RHOF GTPase cycle"/>
</dbReference>
<dbReference type="SignaLink" id="P02572"/>
<dbReference type="BioGRID-ORCS" id="35526">
    <property type="hits" value="1 hit in 3 CRISPR screens"/>
</dbReference>
<dbReference type="GenomeRNAi" id="35526"/>
<dbReference type="PRO" id="PR:P02572"/>
<dbReference type="Proteomes" id="UP000000803">
    <property type="component" value="Chromosome 2R"/>
</dbReference>
<dbReference type="Bgee" id="FBgn0000043">
    <property type="expression patterns" value="Expressed in embryonic/larval hemocyte (Drosophila) and 173 other cell types or tissues"/>
</dbReference>
<dbReference type="GO" id="GO:0015629">
    <property type="term" value="C:actin cytoskeleton"/>
    <property type="evidence" value="ECO:0000318"/>
    <property type="project" value="GO_Central"/>
</dbReference>
<dbReference type="GO" id="GO:0035060">
    <property type="term" value="C:brahma complex"/>
    <property type="evidence" value="ECO:0000314"/>
    <property type="project" value="FlyBase"/>
</dbReference>
<dbReference type="GO" id="GO:0005737">
    <property type="term" value="C:cytoplasm"/>
    <property type="evidence" value="ECO:0007669"/>
    <property type="project" value="UniProtKB-KW"/>
</dbReference>
<dbReference type="GO" id="GO:0005524">
    <property type="term" value="F:ATP binding"/>
    <property type="evidence" value="ECO:0007669"/>
    <property type="project" value="UniProtKB-KW"/>
</dbReference>
<dbReference type="GO" id="GO:0016787">
    <property type="term" value="F:hydrolase activity"/>
    <property type="evidence" value="ECO:0007669"/>
    <property type="project" value="UniProtKB-KW"/>
</dbReference>
<dbReference type="GO" id="GO:0000281">
    <property type="term" value="P:mitotic cytokinesis"/>
    <property type="evidence" value="ECO:0000318"/>
    <property type="project" value="GO_Central"/>
</dbReference>
<dbReference type="GO" id="GO:0030723">
    <property type="term" value="P:ovarian fusome organization"/>
    <property type="evidence" value="ECO:0000270"/>
    <property type="project" value="UniProtKB"/>
</dbReference>
<dbReference type="CDD" id="cd10224">
    <property type="entry name" value="ASKHA_NBD_actin"/>
    <property type="match status" value="1"/>
</dbReference>
<dbReference type="FunFam" id="3.30.420.40:FF:000131">
    <property type="entry name" value="Actin, alpha skeletal muscle"/>
    <property type="match status" value="1"/>
</dbReference>
<dbReference type="FunFam" id="3.30.420.40:FF:000291">
    <property type="entry name" value="Actin, alpha skeletal muscle"/>
    <property type="match status" value="1"/>
</dbReference>
<dbReference type="FunFam" id="3.90.640.10:FF:000047">
    <property type="entry name" value="Actin, alpha skeletal muscle"/>
    <property type="match status" value="1"/>
</dbReference>
<dbReference type="FunFam" id="3.30.420.40:FF:000058">
    <property type="entry name" value="Putative actin-related protein 5"/>
    <property type="match status" value="1"/>
</dbReference>
<dbReference type="Gene3D" id="3.30.420.40">
    <property type="match status" value="2"/>
</dbReference>
<dbReference type="Gene3D" id="3.90.640.10">
    <property type="entry name" value="Actin, Chain A, domain 4"/>
    <property type="match status" value="1"/>
</dbReference>
<dbReference type="InterPro" id="IPR004000">
    <property type="entry name" value="Actin"/>
</dbReference>
<dbReference type="InterPro" id="IPR020902">
    <property type="entry name" value="Actin/actin-like_CS"/>
</dbReference>
<dbReference type="InterPro" id="IPR004001">
    <property type="entry name" value="Actin_CS"/>
</dbReference>
<dbReference type="InterPro" id="IPR043129">
    <property type="entry name" value="ATPase_NBD"/>
</dbReference>
<dbReference type="PANTHER" id="PTHR11937">
    <property type="entry name" value="ACTIN"/>
    <property type="match status" value="1"/>
</dbReference>
<dbReference type="Pfam" id="PF00022">
    <property type="entry name" value="Actin"/>
    <property type="match status" value="1"/>
</dbReference>
<dbReference type="PRINTS" id="PR00190">
    <property type="entry name" value="ACTIN"/>
</dbReference>
<dbReference type="SMART" id="SM00268">
    <property type="entry name" value="ACTIN"/>
    <property type="match status" value="1"/>
</dbReference>
<dbReference type="SUPFAM" id="SSF53067">
    <property type="entry name" value="Actin-like ATPase domain"/>
    <property type="match status" value="2"/>
</dbReference>
<dbReference type="PROSITE" id="PS00406">
    <property type="entry name" value="ACTINS_1"/>
    <property type="match status" value="1"/>
</dbReference>
<dbReference type="PROSITE" id="PS00432">
    <property type="entry name" value="ACTINS_2"/>
    <property type="match status" value="1"/>
</dbReference>
<dbReference type="PROSITE" id="PS01132">
    <property type="entry name" value="ACTINS_ACT_LIKE"/>
    <property type="match status" value="1"/>
</dbReference>
<evidence type="ECO:0000250" key="1"/>
<evidence type="ECO:0000250" key="2">
    <source>
        <dbReference type="UniProtKB" id="P68134"/>
    </source>
</evidence>
<evidence type="ECO:0000250" key="3">
    <source>
        <dbReference type="UniProtKB" id="P68137"/>
    </source>
</evidence>
<evidence type="ECO:0000269" key="4">
    <source>
    </source>
</evidence>
<evidence type="ECO:0000269" key="5">
    <source>
    </source>
</evidence>
<evidence type="ECO:0000269" key="6">
    <source>
    </source>
</evidence>
<evidence type="ECO:0000269" key="7">
    <source>
    </source>
</evidence>
<evidence type="ECO:0000305" key="8"/>
<keyword id="KW-0007">Acetylation</keyword>
<keyword id="KW-0067">ATP-binding</keyword>
<keyword id="KW-0963">Cytoplasm</keyword>
<keyword id="KW-0206">Cytoskeleton</keyword>
<keyword id="KW-0378">Hydrolase</keyword>
<keyword id="KW-0488">Methylation</keyword>
<keyword id="KW-0547">Nucleotide-binding</keyword>
<keyword id="KW-0558">Oxidation</keyword>
<keyword id="KW-1185">Reference proteome</keyword>
<accession>P02572</accession>
<accession>Q24228</accession>
<accession>Q540X3</accession>
<accession>Q9V9J4</accession>
<protein>
    <recommendedName>
        <fullName>Actin-42A</fullName>
        <ecNumber evidence="3">3.6.4.-</ecNumber>
    </recommendedName>
</protein>
<sequence length="376" mass="41824">MCDEEVAALVVDNGSGMCKAGFAGDDAPRAVFPSIVGRPRHQGVMVGMGQKDSYVGDEAQSKRGILTLKYPIEHGIVTNWDDMEKIWHHTFYNELRVAPEEHPVLLTEAPLNPKANREKMTQIMFETFNTPAMYVAIQAVLSLYASGRTTGIVLDSGDGVSHTVPIYEGYALPHAILRLDLAGRDLTDYLMKILTERGYSFTTTAEREIVRDIKEKLCYVALDFEQEMATAASSSSLEKSYELPDGQVITIGNERFRCPESLFQPSFLGMEACGIHETTYNSIMKCDVDIRKDLYANTVLSGGTTMYPGIADRMQKEITALAPSTMKIKIVAPPERKYSVWIGGSILASLSTFQQMWISKQEYDESGPSIVHRKCF</sequence>
<proteinExistence type="evidence at protein level"/>
<gene>
    <name type="primary">Act42A</name>
    <name type="ORF">CG12051</name>
</gene>
<reference key="1">
    <citation type="submission" date="1987-12" db="EMBL/GenBank/DDBJ databases">
        <authorList>
            <person name="Fyrberg E.A."/>
            <person name="Bond B.J."/>
            <person name="Hershey N.D."/>
            <person name="Mixter K.S."/>
            <person name="Davidson N."/>
        </authorList>
    </citation>
    <scope>NUCLEOTIDE SEQUENCE [GENOMIC DNA]</scope>
</reference>
<reference key="2">
    <citation type="submission" date="1990-10" db="EMBL/GenBank/DDBJ databases">
        <authorList>
            <person name="Burn T.C."/>
            <person name="Tobin S.L."/>
        </authorList>
    </citation>
    <scope>NUCLEOTIDE SEQUENCE [GENOMIC DNA]</scope>
    <source>
        <strain>Canton-S</strain>
    </source>
</reference>
<reference key="3">
    <citation type="journal article" date="2000" name="Science">
        <title>The genome sequence of Drosophila melanogaster.</title>
        <authorList>
            <person name="Adams M.D."/>
            <person name="Celniker S.E."/>
            <person name="Holt R.A."/>
            <person name="Evans C.A."/>
            <person name="Gocayne J.D."/>
            <person name="Amanatides P.G."/>
            <person name="Scherer S.E."/>
            <person name="Li P.W."/>
            <person name="Hoskins R.A."/>
            <person name="Galle R.F."/>
            <person name="George R.A."/>
            <person name="Lewis S.E."/>
            <person name="Richards S."/>
            <person name="Ashburner M."/>
            <person name="Henderson S.N."/>
            <person name="Sutton G.G."/>
            <person name="Wortman J.R."/>
            <person name="Yandell M.D."/>
            <person name="Zhang Q."/>
            <person name="Chen L.X."/>
            <person name="Brandon R.C."/>
            <person name="Rogers Y.-H.C."/>
            <person name="Blazej R.G."/>
            <person name="Champe M."/>
            <person name="Pfeiffer B.D."/>
            <person name="Wan K.H."/>
            <person name="Doyle C."/>
            <person name="Baxter E.G."/>
            <person name="Helt G."/>
            <person name="Nelson C.R."/>
            <person name="Miklos G.L.G."/>
            <person name="Abril J.F."/>
            <person name="Agbayani A."/>
            <person name="An H.-J."/>
            <person name="Andrews-Pfannkoch C."/>
            <person name="Baldwin D."/>
            <person name="Ballew R.M."/>
            <person name="Basu A."/>
            <person name="Baxendale J."/>
            <person name="Bayraktaroglu L."/>
            <person name="Beasley E.M."/>
            <person name="Beeson K.Y."/>
            <person name="Benos P.V."/>
            <person name="Berman B.P."/>
            <person name="Bhandari D."/>
            <person name="Bolshakov S."/>
            <person name="Borkova D."/>
            <person name="Botchan M.R."/>
            <person name="Bouck J."/>
            <person name="Brokstein P."/>
            <person name="Brottier P."/>
            <person name="Burtis K.C."/>
            <person name="Busam D.A."/>
            <person name="Butler H."/>
            <person name="Cadieu E."/>
            <person name="Center A."/>
            <person name="Chandra I."/>
            <person name="Cherry J.M."/>
            <person name="Cawley S."/>
            <person name="Dahlke C."/>
            <person name="Davenport L.B."/>
            <person name="Davies P."/>
            <person name="de Pablos B."/>
            <person name="Delcher A."/>
            <person name="Deng Z."/>
            <person name="Mays A.D."/>
            <person name="Dew I."/>
            <person name="Dietz S.M."/>
            <person name="Dodson K."/>
            <person name="Doup L.E."/>
            <person name="Downes M."/>
            <person name="Dugan-Rocha S."/>
            <person name="Dunkov B.C."/>
            <person name="Dunn P."/>
            <person name="Durbin K.J."/>
            <person name="Evangelista C.C."/>
            <person name="Ferraz C."/>
            <person name="Ferriera S."/>
            <person name="Fleischmann W."/>
            <person name="Fosler C."/>
            <person name="Gabrielian A.E."/>
            <person name="Garg N.S."/>
            <person name="Gelbart W.M."/>
            <person name="Glasser K."/>
            <person name="Glodek A."/>
            <person name="Gong F."/>
            <person name="Gorrell J.H."/>
            <person name="Gu Z."/>
            <person name="Guan P."/>
            <person name="Harris M."/>
            <person name="Harris N.L."/>
            <person name="Harvey D.A."/>
            <person name="Heiman T.J."/>
            <person name="Hernandez J.R."/>
            <person name="Houck J."/>
            <person name="Hostin D."/>
            <person name="Houston K.A."/>
            <person name="Howland T.J."/>
            <person name="Wei M.-H."/>
            <person name="Ibegwam C."/>
            <person name="Jalali M."/>
            <person name="Kalush F."/>
            <person name="Karpen G.H."/>
            <person name="Ke Z."/>
            <person name="Kennison J.A."/>
            <person name="Ketchum K.A."/>
            <person name="Kimmel B.E."/>
            <person name="Kodira C.D."/>
            <person name="Kraft C.L."/>
            <person name="Kravitz S."/>
            <person name="Kulp D."/>
            <person name="Lai Z."/>
            <person name="Lasko P."/>
            <person name="Lei Y."/>
            <person name="Levitsky A.A."/>
            <person name="Li J.H."/>
            <person name="Li Z."/>
            <person name="Liang Y."/>
            <person name="Lin X."/>
            <person name="Liu X."/>
            <person name="Mattei B."/>
            <person name="McIntosh T.C."/>
            <person name="McLeod M.P."/>
            <person name="McPherson D."/>
            <person name="Merkulov G."/>
            <person name="Milshina N.V."/>
            <person name="Mobarry C."/>
            <person name="Morris J."/>
            <person name="Moshrefi A."/>
            <person name="Mount S.M."/>
            <person name="Moy M."/>
            <person name="Murphy B."/>
            <person name="Murphy L."/>
            <person name="Muzny D.M."/>
            <person name="Nelson D.L."/>
            <person name="Nelson D.R."/>
            <person name="Nelson K.A."/>
            <person name="Nixon K."/>
            <person name="Nusskern D.R."/>
            <person name="Pacleb J.M."/>
            <person name="Palazzolo M."/>
            <person name="Pittman G.S."/>
            <person name="Pan S."/>
            <person name="Pollard J."/>
            <person name="Puri V."/>
            <person name="Reese M.G."/>
            <person name="Reinert K."/>
            <person name="Remington K."/>
            <person name="Saunders R.D.C."/>
            <person name="Scheeler F."/>
            <person name="Shen H."/>
            <person name="Shue B.C."/>
            <person name="Siden-Kiamos I."/>
            <person name="Simpson M."/>
            <person name="Skupski M.P."/>
            <person name="Smith T.J."/>
            <person name="Spier E."/>
            <person name="Spradling A.C."/>
            <person name="Stapleton M."/>
            <person name="Strong R."/>
            <person name="Sun E."/>
            <person name="Svirskas R."/>
            <person name="Tector C."/>
            <person name="Turner R."/>
            <person name="Venter E."/>
            <person name="Wang A.H."/>
            <person name="Wang X."/>
            <person name="Wang Z.-Y."/>
            <person name="Wassarman D.A."/>
            <person name="Weinstock G.M."/>
            <person name="Weissenbach J."/>
            <person name="Williams S.M."/>
            <person name="Woodage T."/>
            <person name="Worley K.C."/>
            <person name="Wu D."/>
            <person name="Yang S."/>
            <person name="Yao Q.A."/>
            <person name="Ye J."/>
            <person name="Yeh R.-F."/>
            <person name="Zaveri J.S."/>
            <person name="Zhan M."/>
            <person name="Zhang G."/>
            <person name="Zhao Q."/>
            <person name="Zheng L."/>
            <person name="Zheng X.H."/>
            <person name="Zhong F.N."/>
            <person name="Zhong W."/>
            <person name="Zhou X."/>
            <person name="Zhu S.C."/>
            <person name="Zhu X."/>
            <person name="Smith H.O."/>
            <person name="Gibbs R.A."/>
            <person name="Myers E.W."/>
            <person name="Rubin G.M."/>
            <person name="Venter J.C."/>
        </authorList>
    </citation>
    <scope>NUCLEOTIDE SEQUENCE [LARGE SCALE GENOMIC DNA]</scope>
    <source>
        <strain>Berkeley</strain>
    </source>
</reference>
<reference key="4">
    <citation type="journal article" date="2002" name="Genome Biol.">
        <title>Annotation of the Drosophila melanogaster euchromatic genome: a systematic review.</title>
        <authorList>
            <person name="Misra S."/>
            <person name="Crosby M.A."/>
            <person name="Mungall C.J."/>
            <person name="Matthews B.B."/>
            <person name="Campbell K.S."/>
            <person name="Hradecky P."/>
            <person name="Huang Y."/>
            <person name="Kaminker J.S."/>
            <person name="Millburn G.H."/>
            <person name="Prochnik S.E."/>
            <person name="Smith C.D."/>
            <person name="Tupy J.L."/>
            <person name="Whitfield E.J."/>
            <person name="Bayraktaroglu L."/>
            <person name="Berman B.P."/>
            <person name="Bettencourt B.R."/>
            <person name="Celniker S.E."/>
            <person name="de Grey A.D.N.J."/>
            <person name="Drysdale R.A."/>
            <person name="Harris N.L."/>
            <person name="Richter J."/>
            <person name="Russo S."/>
            <person name="Schroeder A.J."/>
            <person name="Shu S.Q."/>
            <person name="Stapleton M."/>
            <person name="Yamada C."/>
            <person name="Ashburner M."/>
            <person name="Gelbart W.M."/>
            <person name="Rubin G.M."/>
            <person name="Lewis S.E."/>
        </authorList>
    </citation>
    <scope>GENOME REANNOTATION</scope>
    <source>
        <strain>Berkeley</strain>
    </source>
</reference>
<reference key="5">
    <citation type="journal article" date="2002" name="Genome Biol.">
        <title>A Drosophila full-length cDNA resource.</title>
        <authorList>
            <person name="Stapleton M."/>
            <person name="Carlson J.W."/>
            <person name="Brokstein P."/>
            <person name="Yu C."/>
            <person name="Champe M."/>
            <person name="George R.A."/>
            <person name="Guarin H."/>
            <person name="Kronmiller B."/>
            <person name="Pacleb J.M."/>
            <person name="Park S."/>
            <person name="Wan K.H."/>
            <person name="Rubin G.M."/>
            <person name="Celniker S.E."/>
        </authorList>
    </citation>
    <scope>NUCLEOTIDE SEQUENCE [LARGE SCALE MRNA]</scope>
    <source>
        <strain>Berkeley</strain>
        <tissue>Embryo</tissue>
    </source>
</reference>
<reference key="6">
    <citation type="journal article" date="1981" name="Cell">
        <title>The actin genes of Drosophila: protein coding regions are highly conserved but intron positions are not.</title>
        <authorList>
            <person name="Fyrberg E.A."/>
            <person name="Bond B.J."/>
            <person name="Hershey N.D."/>
            <person name="Mixter K.S."/>
            <person name="Davidson N."/>
        </authorList>
    </citation>
    <scope>NUCLEOTIDE SEQUENCE [GENOMIC DNA] OF 1-160 AND 229-376</scope>
</reference>
<reference key="7">
    <citation type="journal article" date="1987" name="Nucleic Acids Res.">
        <title>20-hydroxyecdysone regulates cytoplasmic actin gene expression in Drosophila cultured cells.</title>
        <authorList>
            <person name="Couderc J.-L."/>
            <person name="Hilal L."/>
            <person name="Sobier M.L."/>
            <person name="Dastugue B."/>
        </authorList>
    </citation>
    <scope>NUCLEOTIDE SEQUENCE [GENOMIC DNA] OF 1-12</scope>
</reference>
<reference key="8">
    <citation type="journal article" date="1990" name="Dev. Genet.">
        <title>Transcripts of individual Drosophila actin genes are differentially distributed during embryogenesis.</title>
        <authorList>
            <person name="Tobin S.L."/>
            <person name="Cook P.J."/>
            <person name="Burn T.C."/>
        </authorList>
    </citation>
    <scope>TISSUE SPECIFICITY</scope>
</reference>
<reference key="9">
    <citation type="journal article" date="1997" name="Dev. Biol.">
        <title>The Drosophila ovarian tumor gene is required for the organization of actin filaments during multiple stages in oogenesis.</title>
        <authorList>
            <person name="Rodesch C."/>
            <person name="Pettus J."/>
            <person name="Nagoshi R.N."/>
        </authorList>
    </citation>
    <scope>SUBCELLULAR LOCATION</scope>
</reference>
<reference key="10">
    <citation type="journal article" date="2011" name="Science">
        <title>Direct redox regulation of F-actin assembly and disassembly by Mical.</title>
        <authorList>
            <person name="Hung R.J."/>
            <person name="Pak C.W."/>
            <person name="Terman J.R."/>
        </authorList>
    </citation>
    <scope>OXIDATION AT MET-45 AND MET-48</scope>
</reference>
<reference key="11">
    <citation type="journal article" date="2018" name="Elife">
        <title>SETD3 protein is the actin-specific histidine N-methyltransferase.</title>
        <authorList>
            <person name="Kwiatkowski S."/>
            <person name="Seliga A.K."/>
            <person name="Vertommen D."/>
            <person name="Terreri M."/>
            <person name="Ishikawa T."/>
            <person name="Grabowska I."/>
            <person name="Tiebe M."/>
            <person name="Teleman A.A."/>
            <person name="Jagielski A.K."/>
            <person name="Veiga-da-Cunha M."/>
            <person name="Drozak J."/>
        </authorList>
    </citation>
    <scope>METHYLATION AT HIS-74</scope>
</reference>
<comment type="function">
    <text>Actins are highly conserved proteins that are involved in various types of cell motility and are ubiquitously expressed in all eukaryotic cells.</text>
</comment>
<comment type="function">
    <text>Multiple isoforms are involved in various cellular functions such as cytoskeleton structure, cell mobility, chromosome movement and muscle contraction.</text>
</comment>
<comment type="catalytic activity">
    <reaction evidence="3">
        <text>ATP + H2O = ADP + phosphate + H(+)</text>
        <dbReference type="Rhea" id="RHEA:13065"/>
        <dbReference type="ChEBI" id="CHEBI:15377"/>
        <dbReference type="ChEBI" id="CHEBI:15378"/>
        <dbReference type="ChEBI" id="CHEBI:30616"/>
        <dbReference type="ChEBI" id="CHEBI:43474"/>
        <dbReference type="ChEBI" id="CHEBI:456216"/>
    </reaction>
</comment>
<comment type="interaction">
    <interactant intactId="EBI-110368">
        <id>P02572</id>
    </interactant>
    <interactant intactId="EBI-178503">
        <id>P02574</id>
        <label>Act79B</label>
    </interactant>
    <organismsDiffer>false</organismsDiffer>
    <experiments>4</experiments>
</comment>
<comment type="interaction">
    <interactant intactId="EBI-110368">
        <id>P02572</id>
    </interactant>
    <interactant intactId="EBI-184828">
        <id>P83967</id>
        <label>Act88F</label>
    </interactant>
    <organismsDiffer>false</organismsDiffer>
    <experiments>4</experiments>
</comment>
<comment type="subcellular location">
    <subcellularLocation>
        <location evidence="7">Cytoplasm</location>
        <location evidence="7">Cytoskeleton</location>
    </subcellularLocation>
    <text evidence="7">Associated with spectrosomes during female cystocyte proliferation and differentiation, but dissociates, or becomes undetectable, upon fusome maturation (PubMed:9344535). Component of the inner rim of ring canals connecting the cytoplasm of nurse cells and oocyte during oogenesis (PubMed:9344535).</text>
</comment>
<comment type="tissue specificity">
    <text evidence="4">All cells and tissues of the developing embryo. Later in development, expression is higher in midgut, brain, nerve cord, and gonads.</text>
</comment>
<comment type="induction">
    <text>By 20-hydroxyecdysone.</text>
</comment>
<comment type="PTM">
    <text evidence="2">N-terminal cleavage of acetylated cysteine of immature actin by ACTMAP.</text>
</comment>
<comment type="PTM">
    <text evidence="5">Oxidation of Met-45 by Mical to form methionine sulfoxide promotes actin filament depolymerization. Methionine sulfoxide is produced stereospecifically, but it is not known whether the (S)-S-oxide or the (R)-S-oxide is produced.</text>
</comment>
<comment type="miscellaneous">
    <text>In Drosophila there are 6 closely related actin genes.</text>
</comment>
<comment type="similarity">
    <text evidence="8">Belongs to the actin family.</text>
</comment>
<organism>
    <name type="scientific">Drosophila melanogaster</name>
    <name type="common">Fruit fly</name>
    <dbReference type="NCBI Taxonomy" id="7227"/>
    <lineage>
        <taxon>Eukaryota</taxon>
        <taxon>Metazoa</taxon>
        <taxon>Ecdysozoa</taxon>
        <taxon>Arthropoda</taxon>
        <taxon>Hexapoda</taxon>
        <taxon>Insecta</taxon>
        <taxon>Pterygota</taxon>
        <taxon>Neoptera</taxon>
        <taxon>Endopterygota</taxon>
        <taxon>Diptera</taxon>
        <taxon>Brachycera</taxon>
        <taxon>Muscomorpha</taxon>
        <taxon>Ephydroidea</taxon>
        <taxon>Drosophilidae</taxon>
        <taxon>Drosophila</taxon>
        <taxon>Sophophora</taxon>
    </lineage>
</organism>
<name>ACT2_DROME</name>